<reference key="1">
    <citation type="journal article" date="2002" name="Proc. Natl. Acad. Sci. U.S.A.">
        <title>Extensive mosaic structure revealed by the complete genome sequence of uropathogenic Escherichia coli.</title>
        <authorList>
            <person name="Welch R.A."/>
            <person name="Burland V."/>
            <person name="Plunkett G. III"/>
            <person name="Redford P."/>
            <person name="Roesch P."/>
            <person name="Rasko D."/>
            <person name="Buckles E.L."/>
            <person name="Liou S.-R."/>
            <person name="Boutin A."/>
            <person name="Hackett J."/>
            <person name="Stroud D."/>
            <person name="Mayhew G.F."/>
            <person name="Rose D.J."/>
            <person name="Zhou S."/>
            <person name="Schwartz D.C."/>
            <person name="Perna N.T."/>
            <person name="Mobley H.L.T."/>
            <person name="Donnenberg M.S."/>
            <person name="Blattner F.R."/>
        </authorList>
    </citation>
    <scope>NUCLEOTIDE SEQUENCE [LARGE SCALE GENOMIC DNA]</scope>
    <source>
        <strain>CFT073 / ATCC 700928 / UPEC</strain>
    </source>
</reference>
<evidence type="ECO:0000250" key="1"/>
<evidence type="ECO:0000255" key="2">
    <source>
        <dbReference type="HAMAP-Rule" id="MF_01010"/>
    </source>
</evidence>
<keyword id="KW-0004">4Fe-4S</keyword>
<keyword id="KW-0408">Iron</keyword>
<keyword id="KW-0411">Iron-sulfur</keyword>
<keyword id="KW-0479">Metal-binding</keyword>
<keyword id="KW-0489">Methyltransferase</keyword>
<keyword id="KW-1185">Reference proteome</keyword>
<keyword id="KW-0698">rRNA processing</keyword>
<keyword id="KW-0949">S-adenosyl-L-methionine</keyword>
<keyword id="KW-0808">Transferase</keyword>
<feature type="initiator methionine" description="Removed" evidence="1">
    <location>
        <position position="1"/>
    </location>
</feature>
<feature type="chain" id="PRO_0000161894" description="23S rRNA (uracil(1939)-C(5))-methyltransferase RlmD">
    <location>
        <begin position="2"/>
        <end position="433"/>
    </location>
</feature>
<feature type="domain" description="TRAM" evidence="2">
    <location>
        <begin position="10"/>
        <end position="68"/>
    </location>
</feature>
<feature type="active site" description="Nucleophile" evidence="2">
    <location>
        <position position="389"/>
    </location>
</feature>
<feature type="binding site" evidence="2">
    <location>
        <position position="81"/>
    </location>
    <ligand>
        <name>[4Fe-4S] cluster</name>
        <dbReference type="ChEBI" id="CHEBI:49883"/>
    </ligand>
</feature>
<feature type="binding site" evidence="2">
    <location>
        <position position="87"/>
    </location>
    <ligand>
        <name>[4Fe-4S] cluster</name>
        <dbReference type="ChEBI" id="CHEBI:49883"/>
    </ligand>
</feature>
<feature type="binding site" evidence="2">
    <location>
        <position position="90"/>
    </location>
    <ligand>
        <name>[4Fe-4S] cluster</name>
        <dbReference type="ChEBI" id="CHEBI:49883"/>
    </ligand>
</feature>
<feature type="binding site" evidence="2">
    <location>
        <position position="162"/>
    </location>
    <ligand>
        <name>[4Fe-4S] cluster</name>
        <dbReference type="ChEBI" id="CHEBI:49883"/>
    </ligand>
</feature>
<feature type="binding site" evidence="2">
    <location>
        <position position="265"/>
    </location>
    <ligand>
        <name>S-adenosyl-L-methionine</name>
        <dbReference type="ChEBI" id="CHEBI:59789"/>
    </ligand>
</feature>
<feature type="binding site" evidence="2">
    <location>
        <position position="294"/>
    </location>
    <ligand>
        <name>S-adenosyl-L-methionine</name>
        <dbReference type="ChEBI" id="CHEBI:59789"/>
    </ligand>
</feature>
<feature type="binding site" evidence="2">
    <location>
        <position position="299"/>
    </location>
    <ligand>
        <name>S-adenosyl-L-methionine</name>
        <dbReference type="ChEBI" id="CHEBI:59789"/>
    </ligand>
</feature>
<feature type="binding site" evidence="2">
    <location>
        <position position="315"/>
    </location>
    <ligand>
        <name>S-adenosyl-L-methionine</name>
        <dbReference type="ChEBI" id="CHEBI:59789"/>
    </ligand>
</feature>
<feature type="binding site" evidence="2">
    <location>
        <position position="342"/>
    </location>
    <ligand>
        <name>S-adenosyl-L-methionine</name>
        <dbReference type="ChEBI" id="CHEBI:59789"/>
    </ligand>
</feature>
<feature type="binding site" evidence="2">
    <location>
        <position position="363"/>
    </location>
    <ligand>
        <name>S-adenosyl-L-methionine</name>
        <dbReference type="ChEBI" id="CHEBI:59789"/>
    </ligand>
</feature>
<dbReference type="EC" id="2.1.1.190" evidence="2"/>
<dbReference type="EMBL" id="AE014075">
    <property type="protein sequence ID" value="AAN81796.1"/>
    <property type="molecule type" value="Genomic_DNA"/>
</dbReference>
<dbReference type="RefSeq" id="WP_000046817.1">
    <property type="nucleotide sequence ID" value="NZ_CP051263.1"/>
</dbReference>
<dbReference type="SMR" id="Q8FEG6"/>
<dbReference type="STRING" id="199310.c3348"/>
<dbReference type="KEGG" id="ecc:c3348"/>
<dbReference type="eggNOG" id="COG2265">
    <property type="taxonomic scope" value="Bacteria"/>
</dbReference>
<dbReference type="HOGENOM" id="CLU_014689_8_2_6"/>
<dbReference type="BioCyc" id="ECOL199310:C3348-MONOMER"/>
<dbReference type="Proteomes" id="UP000001410">
    <property type="component" value="Chromosome"/>
</dbReference>
<dbReference type="GO" id="GO:0051539">
    <property type="term" value="F:4 iron, 4 sulfur cluster binding"/>
    <property type="evidence" value="ECO:0007669"/>
    <property type="project" value="UniProtKB-KW"/>
</dbReference>
<dbReference type="GO" id="GO:0005506">
    <property type="term" value="F:iron ion binding"/>
    <property type="evidence" value="ECO:0007669"/>
    <property type="project" value="UniProtKB-UniRule"/>
</dbReference>
<dbReference type="GO" id="GO:0003723">
    <property type="term" value="F:RNA binding"/>
    <property type="evidence" value="ECO:0007669"/>
    <property type="project" value="InterPro"/>
</dbReference>
<dbReference type="GO" id="GO:0070041">
    <property type="term" value="F:rRNA (uridine-C5-)-methyltransferase activity"/>
    <property type="evidence" value="ECO:0007669"/>
    <property type="project" value="UniProtKB-UniRule"/>
</dbReference>
<dbReference type="GO" id="GO:0070475">
    <property type="term" value="P:rRNA base methylation"/>
    <property type="evidence" value="ECO:0007669"/>
    <property type="project" value="TreeGrafter"/>
</dbReference>
<dbReference type="CDD" id="cd02440">
    <property type="entry name" value="AdoMet_MTases"/>
    <property type="match status" value="1"/>
</dbReference>
<dbReference type="FunFam" id="3.40.50.150:FF:000009">
    <property type="entry name" value="23S rRNA (Uracil(1939)-C(5))-methyltransferase RlmD"/>
    <property type="match status" value="1"/>
</dbReference>
<dbReference type="FunFam" id="2.40.50.1070:FF:000004">
    <property type="entry name" value="23S rRNA (uracil(1939)-C(5))-methyltransferase RlmD"/>
    <property type="match status" value="1"/>
</dbReference>
<dbReference type="FunFam" id="2.40.50.140:FF:000097">
    <property type="entry name" value="23S rRNA (uracil(1939)-C(5))-methyltransferase RlmD"/>
    <property type="match status" value="1"/>
</dbReference>
<dbReference type="Gene3D" id="2.40.50.1070">
    <property type="match status" value="1"/>
</dbReference>
<dbReference type="Gene3D" id="2.40.50.140">
    <property type="entry name" value="Nucleic acid-binding proteins"/>
    <property type="match status" value="1"/>
</dbReference>
<dbReference type="Gene3D" id="3.40.50.150">
    <property type="entry name" value="Vaccinia Virus protein VP39"/>
    <property type="match status" value="1"/>
</dbReference>
<dbReference type="HAMAP" id="MF_01010">
    <property type="entry name" value="23SrRNA_methyltr_RlmD"/>
    <property type="match status" value="1"/>
</dbReference>
<dbReference type="InterPro" id="IPR001566">
    <property type="entry name" value="23S_rRNA_MeTrfase_RlmD"/>
</dbReference>
<dbReference type="InterPro" id="IPR030390">
    <property type="entry name" value="MeTrfase_TrmA_AS"/>
</dbReference>
<dbReference type="InterPro" id="IPR030391">
    <property type="entry name" value="MeTrfase_TrmA_CS"/>
</dbReference>
<dbReference type="InterPro" id="IPR012340">
    <property type="entry name" value="NA-bd_OB-fold"/>
</dbReference>
<dbReference type="InterPro" id="IPR029063">
    <property type="entry name" value="SAM-dependent_MTases_sf"/>
</dbReference>
<dbReference type="InterPro" id="IPR002792">
    <property type="entry name" value="TRAM_dom"/>
</dbReference>
<dbReference type="InterPro" id="IPR010280">
    <property type="entry name" value="U5_MeTrfase_fam"/>
</dbReference>
<dbReference type="NCBIfam" id="NF009639">
    <property type="entry name" value="PRK13168.1"/>
    <property type="match status" value="1"/>
</dbReference>
<dbReference type="NCBIfam" id="TIGR00479">
    <property type="entry name" value="rumA"/>
    <property type="match status" value="1"/>
</dbReference>
<dbReference type="PANTHER" id="PTHR11061:SF49">
    <property type="entry name" value="23S RRNA (URACIL(1939)-C(5))-METHYLTRANSFERASE RLMD"/>
    <property type="match status" value="1"/>
</dbReference>
<dbReference type="PANTHER" id="PTHR11061">
    <property type="entry name" value="RNA M5U METHYLTRANSFERASE"/>
    <property type="match status" value="1"/>
</dbReference>
<dbReference type="Pfam" id="PF01938">
    <property type="entry name" value="TRAM"/>
    <property type="match status" value="1"/>
</dbReference>
<dbReference type="Pfam" id="PF05958">
    <property type="entry name" value="tRNA_U5-meth_tr"/>
    <property type="match status" value="1"/>
</dbReference>
<dbReference type="SUPFAM" id="SSF50249">
    <property type="entry name" value="Nucleic acid-binding proteins"/>
    <property type="match status" value="1"/>
</dbReference>
<dbReference type="SUPFAM" id="SSF53335">
    <property type="entry name" value="S-adenosyl-L-methionine-dependent methyltransferases"/>
    <property type="match status" value="1"/>
</dbReference>
<dbReference type="PROSITE" id="PS51687">
    <property type="entry name" value="SAM_MT_RNA_M5U"/>
    <property type="match status" value="1"/>
</dbReference>
<dbReference type="PROSITE" id="PS50926">
    <property type="entry name" value="TRAM"/>
    <property type="match status" value="1"/>
</dbReference>
<dbReference type="PROSITE" id="PS01230">
    <property type="entry name" value="TRMA_1"/>
    <property type="match status" value="1"/>
</dbReference>
<dbReference type="PROSITE" id="PS01231">
    <property type="entry name" value="TRMA_2"/>
    <property type="match status" value="1"/>
</dbReference>
<sequence length="433" mass="48042">MAQFYSAKRRTTTRQIITVSVNDLDSFGQGVARHNGKTLFIPGLLPQENAEVTVTEDKKQYARAKVVRRLSDSPERETPRCPHFGVCGGCQQQHASVDLQQRSKSAALARLMKHEVSEVIADVPWGYRRRARLSLNYLPKTQQLQMGFRKAGSSDIVDVKQCPILVPQLEALLPKVRACLGSLQAMRHLGHVELVQATSGTLMILRHTAPLSSADREKLECFSHSEGLDLYLAPDSEILETVSGEMPWYDSNGLRLTFSPRDFIQVNAGVNQKMVARALEWLDVEPEDRVLDLFCGMGNFTLPLATQAASVVGVEGVPALVEKGQQNARLNGLQNVTFYHENLEEDVTKQPWAKNGFDKVLLDPARAGAAGVMQQIIKLEPIRIVYVSCNPATLARDSEALLKAGYTIARLAMLDMFPHTGHLESMVLFSRVK</sequence>
<protein>
    <recommendedName>
        <fullName evidence="2">23S rRNA (uracil(1939)-C(5))-methyltransferase RlmD</fullName>
        <ecNumber evidence="2">2.1.1.190</ecNumber>
    </recommendedName>
    <alternativeName>
        <fullName evidence="2">23S rRNA(m5U1939)-methyltransferase</fullName>
    </alternativeName>
</protein>
<gene>
    <name evidence="2" type="primary">rlmD</name>
    <name type="synonym">rumA</name>
    <name type="ordered locus">c3348</name>
</gene>
<comment type="function">
    <text evidence="2">Catalyzes the formation of 5-methyl-uridine at position 1939 (m5U1939) in 23S rRNA.</text>
</comment>
<comment type="catalytic activity">
    <reaction evidence="2">
        <text>uridine(1939) in 23S rRNA + S-adenosyl-L-methionine = 5-methyluridine(1939) in 23S rRNA + S-adenosyl-L-homocysteine + H(+)</text>
        <dbReference type="Rhea" id="RHEA:42908"/>
        <dbReference type="Rhea" id="RHEA-COMP:10278"/>
        <dbReference type="Rhea" id="RHEA-COMP:10279"/>
        <dbReference type="ChEBI" id="CHEBI:15378"/>
        <dbReference type="ChEBI" id="CHEBI:57856"/>
        <dbReference type="ChEBI" id="CHEBI:59789"/>
        <dbReference type="ChEBI" id="CHEBI:65315"/>
        <dbReference type="ChEBI" id="CHEBI:74447"/>
        <dbReference type="EC" id="2.1.1.190"/>
    </reaction>
</comment>
<comment type="similarity">
    <text evidence="2">Belongs to the class I-like SAM-binding methyltransferase superfamily. RNA M5U methyltransferase family. RlmD subfamily.</text>
</comment>
<proteinExistence type="inferred from homology"/>
<accession>Q8FEG6</accession>
<organism>
    <name type="scientific">Escherichia coli O6:H1 (strain CFT073 / ATCC 700928 / UPEC)</name>
    <dbReference type="NCBI Taxonomy" id="199310"/>
    <lineage>
        <taxon>Bacteria</taxon>
        <taxon>Pseudomonadati</taxon>
        <taxon>Pseudomonadota</taxon>
        <taxon>Gammaproteobacteria</taxon>
        <taxon>Enterobacterales</taxon>
        <taxon>Enterobacteriaceae</taxon>
        <taxon>Escherichia</taxon>
    </lineage>
</organism>
<name>RLMD_ECOL6</name>